<dbReference type="EC" id="3.1.-.-" evidence="1"/>
<dbReference type="EMBL" id="CP000738">
    <property type="protein sequence ID" value="ABR58902.1"/>
    <property type="molecule type" value="Genomic_DNA"/>
</dbReference>
<dbReference type="RefSeq" id="WP_011974257.1">
    <property type="nucleotide sequence ID" value="NC_009636.1"/>
</dbReference>
<dbReference type="RefSeq" id="YP_001325737.1">
    <property type="nucleotide sequence ID" value="NC_009636.1"/>
</dbReference>
<dbReference type="SMR" id="A6U5H2"/>
<dbReference type="STRING" id="366394.Smed_0042"/>
<dbReference type="GeneID" id="61611169"/>
<dbReference type="KEGG" id="smd:Smed_0042"/>
<dbReference type="PATRIC" id="fig|366394.8.peg.3096"/>
<dbReference type="eggNOG" id="COG0319">
    <property type="taxonomic scope" value="Bacteria"/>
</dbReference>
<dbReference type="HOGENOM" id="CLU_106710_0_0_5"/>
<dbReference type="OrthoDB" id="9807740at2"/>
<dbReference type="Proteomes" id="UP000001108">
    <property type="component" value="Chromosome"/>
</dbReference>
<dbReference type="GO" id="GO:0005737">
    <property type="term" value="C:cytoplasm"/>
    <property type="evidence" value="ECO:0007669"/>
    <property type="project" value="UniProtKB-SubCell"/>
</dbReference>
<dbReference type="GO" id="GO:0004222">
    <property type="term" value="F:metalloendopeptidase activity"/>
    <property type="evidence" value="ECO:0007669"/>
    <property type="project" value="InterPro"/>
</dbReference>
<dbReference type="GO" id="GO:0004521">
    <property type="term" value="F:RNA endonuclease activity"/>
    <property type="evidence" value="ECO:0007669"/>
    <property type="project" value="UniProtKB-UniRule"/>
</dbReference>
<dbReference type="GO" id="GO:0008270">
    <property type="term" value="F:zinc ion binding"/>
    <property type="evidence" value="ECO:0007669"/>
    <property type="project" value="UniProtKB-UniRule"/>
</dbReference>
<dbReference type="GO" id="GO:0006364">
    <property type="term" value="P:rRNA processing"/>
    <property type="evidence" value="ECO:0007669"/>
    <property type="project" value="UniProtKB-UniRule"/>
</dbReference>
<dbReference type="Gene3D" id="3.40.390.30">
    <property type="entry name" value="Metalloproteases ('zincins'), catalytic domain"/>
    <property type="match status" value="1"/>
</dbReference>
<dbReference type="HAMAP" id="MF_00009">
    <property type="entry name" value="Endoribonucl_YbeY"/>
    <property type="match status" value="1"/>
</dbReference>
<dbReference type="InterPro" id="IPR023091">
    <property type="entry name" value="MetalPrtase_cat_dom_sf_prd"/>
</dbReference>
<dbReference type="InterPro" id="IPR002036">
    <property type="entry name" value="YbeY"/>
</dbReference>
<dbReference type="InterPro" id="IPR020549">
    <property type="entry name" value="YbeY_CS"/>
</dbReference>
<dbReference type="NCBIfam" id="TIGR00043">
    <property type="entry name" value="rRNA maturation RNase YbeY"/>
    <property type="match status" value="1"/>
</dbReference>
<dbReference type="PANTHER" id="PTHR46986">
    <property type="entry name" value="ENDORIBONUCLEASE YBEY, CHLOROPLASTIC"/>
    <property type="match status" value="1"/>
</dbReference>
<dbReference type="PANTHER" id="PTHR46986:SF1">
    <property type="entry name" value="ENDORIBONUCLEASE YBEY, CHLOROPLASTIC"/>
    <property type="match status" value="1"/>
</dbReference>
<dbReference type="Pfam" id="PF02130">
    <property type="entry name" value="YbeY"/>
    <property type="match status" value="1"/>
</dbReference>
<dbReference type="SUPFAM" id="SSF55486">
    <property type="entry name" value="Metalloproteases ('zincins'), catalytic domain"/>
    <property type="match status" value="1"/>
</dbReference>
<dbReference type="PROSITE" id="PS01306">
    <property type="entry name" value="UPF0054"/>
    <property type="match status" value="1"/>
</dbReference>
<evidence type="ECO:0000255" key="1">
    <source>
        <dbReference type="HAMAP-Rule" id="MF_00009"/>
    </source>
</evidence>
<comment type="function">
    <text evidence="1">Single strand-specific metallo-endoribonuclease involved in late-stage 70S ribosome quality control and in maturation of the 3' terminus of the 16S rRNA.</text>
</comment>
<comment type="cofactor">
    <cofactor evidence="1">
        <name>Zn(2+)</name>
        <dbReference type="ChEBI" id="CHEBI:29105"/>
    </cofactor>
    <text evidence="1">Binds 1 zinc ion.</text>
</comment>
<comment type="subcellular location">
    <subcellularLocation>
        <location evidence="1">Cytoplasm</location>
    </subcellularLocation>
</comment>
<comment type="similarity">
    <text evidence="1">Belongs to the endoribonuclease YbeY family.</text>
</comment>
<protein>
    <recommendedName>
        <fullName evidence="1">Endoribonuclease YbeY</fullName>
        <ecNumber evidence="1">3.1.-.-</ecNumber>
    </recommendedName>
</protein>
<feature type="chain" id="PRO_1000000744" description="Endoribonuclease YbeY">
    <location>
        <begin position="1"/>
        <end position="168"/>
    </location>
</feature>
<feature type="binding site" evidence="1">
    <location>
        <position position="126"/>
    </location>
    <ligand>
        <name>Zn(2+)</name>
        <dbReference type="ChEBI" id="CHEBI:29105"/>
        <note>catalytic</note>
    </ligand>
</feature>
<feature type="binding site" evidence="1">
    <location>
        <position position="130"/>
    </location>
    <ligand>
        <name>Zn(2+)</name>
        <dbReference type="ChEBI" id="CHEBI:29105"/>
        <note>catalytic</note>
    </ligand>
</feature>
<feature type="binding site" evidence="1">
    <location>
        <position position="136"/>
    </location>
    <ligand>
        <name>Zn(2+)</name>
        <dbReference type="ChEBI" id="CHEBI:29105"/>
        <note>catalytic</note>
    </ligand>
</feature>
<sequence length="168" mass="18729">MTALDIQISVEAGDWPPEDELQSFSEVVLEAAADFLAREERQPLSAEAAELSLVFTDDQSIKAINAEWRGQDKPTNVLSFPAFPVTPGKMPGLMLGDIVVAHETLRREAAELEKPFDAHLTHLLVHGFLHLFGYDHIEDDEAERMERLETRILARLGLSDPYGDLPPV</sequence>
<keyword id="KW-0963">Cytoplasm</keyword>
<keyword id="KW-0255">Endonuclease</keyword>
<keyword id="KW-0378">Hydrolase</keyword>
<keyword id="KW-0479">Metal-binding</keyword>
<keyword id="KW-0540">Nuclease</keyword>
<keyword id="KW-0690">Ribosome biogenesis</keyword>
<keyword id="KW-0698">rRNA processing</keyword>
<keyword id="KW-0862">Zinc</keyword>
<name>YBEY_SINMW</name>
<proteinExistence type="inferred from homology"/>
<gene>
    <name evidence="1" type="primary">ybeY</name>
    <name type="ordered locus">Smed_0042</name>
</gene>
<organism>
    <name type="scientific">Sinorhizobium medicae (strain WSM419)</name>
    <name type="common">Ensifer medicae</name>
    <dbReference type="NCBI Taxonomy" id="366394"/>
    <lineage>
        <taxon>Bacteria</taxon>
        <taxon>Pseudomonadati</taxon>
        <taxon>Pseudomonadota</taxon>
        <taxon>Alphaproteobacteria</taxon>
        <taxon>Hyphomicrobiales</taxon>
        <taxon>Rhizobiaceae</taxon>
        <taxon>Sinorhizobium/Ensifer group</taxon>
        <taxon>Sinorhizobium</taxon>
    </lineage>
</organism>
<accession>A6U5H2</accession>
<reference key="1">
    <citation type="submission" date="2007-06" db="EMBL/GenBank/DDBJ databases">
        <title>Complete sequence of Sinorhizobium medicae WSM419 chromosome.</title>
        <authorList>
            <consortium name="US DOE Joint Genome Institute"/>
            <person name="Copeland A."/>
            <person name="Lucas S."/>
            <person name="Lapidus A."/>
            <person name="Barry K."/>
            <person name="Glavina del Rio T."/>
            <person name="Dalin E."/>
            <person name="Tice H."/>
            <person name="Pitluck S."/>
            <person name="Chain P."/>
            <person name="Malfatti S."/>
            <person name="Shin M."/>
            <person name="Vergez L."/>
            <person name="Schmutz J."/>
            <person name="Larimer F."/>
            <person name="Land M."/>
            <person name="Hauser L."/>
            <person name="Kyrpides N."/>
            <person name="Mikhailova N."/>
            <person name="Reeve W.G."/>
            <person name="Richardson P."/>
        </authorList>
    </citation>
    <scope>NUCLEOTIDE SEQUENCE [LARGE SCALE GENOMIC DNA]</scope>
    <source>
        <strain>WSM419</strain>
    </source>
</reference>